<gene>
    <name evidence="1" type="primary">lipA</name>
    <name type="ordered locus">NT01EI_2948</name>
</gene>
<organism>
    <name type="scientific">Edwardsiella ictaluri (strain 93-146)</name>
    <dbReference type="NCBI Taxonomy" id="634503"/>
    <lineage>
        <taxon>Bacteria</taxon>
        <taxon>Pseudomonadati</taxon>
        <taxon>Pseudomonadota</taxon>
        <taxon>Gammaproteobacteria</taxon>
        <taxon>Enterobacterales</taxon>
        <taxon>Hafniaceae</taxon>
        <taxon>Edwardsiella</taxon>
    </lineage>
</organism>
<keyword id="KW-0004">4Fe-4S</keyword>
<keyword id="KW-0963">Cytoplasm</keyword>
<keyword id="KW-0408">Iron</keyword>
<keyword id="KW-0411">Iron-sulfur</keyword>
<keyword id="KW-0479">Metal-binding</keyword>
<keyword id="KW-0949">S-adenosyl-L-methionine</keyword>
<keyword id="KW-0808">Transferase</keyword>
<comment type="function">
    <text evidence="1">Catalyzes the radical-mediated insertion of two sulfur atoms into the C-6 and C-8 positions of the octanoyl moiety bound to the lipoyl domains of lipoate-dependent enzymes, thereby converting the octanoylated domains into lipoylated derivatives.</text>
</comment>
<comment type="catalytic activity">
    <reaction evidence="1">
        <text>[[Fe-S] cluster scaffold protein carrying a second [4Fe-4S](2+) cluster] + N(6)-octanoyl-L-lysyl-[protein] + 2 oxidized [2Fe-2S]-[ferredoxin] + 2 S-adenosyl-L-methionine + 4 H(+) = [[Fe-S] cluster scaffold protein] + N(6)-[(R)-dihydrolipoyl]-L-lysyl-[protein] + 4 Fe(3+) + 2 hydrogen sulfide + 2 5'-deoxyadenosine + 2 L-methionine + 2 reduced [2Fe-2S]-[ferredoxin]</text>
        <dbReference type="Rhea" id="RHEA:16585"/>
        <dbReference type="Rhea" id="RHEA-COMP:9928"/>
        <dbReference type="Rhea" id="RHEA-COMP:10000"/>
        <dbReference type="Rhea" id="RHEA-COMP:10001"/>
        <dbReference type="Rhea" id="RHEA-COMP:10475"/>
        <dbReference type="Rhea" id="RHEA-COMP:14568"/>
        <dbReference type="Rhea" id="RHEA-COMP:14569"/>
        <dbReference type="ChEBI" id="CHEBI:15378"/>
        <dbReference type="ChEBI" id="CHEBI:17319"/>
        <dbReference type="ChEBI" id="CHEBI:29034"/>
        <dbReference type="ChEBI" id="CHEBI:29919"/>
        <dbReference type="ChEBI" id="CHEBI:33722"/>
        <dbReference type="ChEBI" id="CHEBI:33737"/>
        <dbReference type="ChEBI" id="CHEBI:33738"/>
        <dbReference type="ChEBI" id="CHEBI:57844"/>
        <dbReference type="ChEBI" id="CHEBI:59789"/>
        <dbReference type="ChEBI" id="CHEBI:78809"/>
        <dbReference type="ChEBI" id="CHEBI:83100"/>
        <dbReference type="EC" id="2.8.1.8"/>
    </reaction>
</comment>
<comment type="cofactor">
    <cofactor evidence="1">
        <name>[4Fe-4S] cluster</name>
        <dbReference type="ChEBI" id="CHEBI:49883"/>
    </cofactor>
    <text evidence="1">Binds 2 [4Fe-4S] clusters per subunit. One cluster is coordinated with 3 cysteines and an exchangeable S-adenosyl-L-methionine.</text>
</comment>
<comment type="pathway">
    <text evidence="1">Protein modification; protein lipoylation via endogenous pathway; protein N(6)-(lipoyl)lysine from octanoyl-[acyl-carrier-protein]: step 2/2.</text>
</comment>
<comment type="subcellular location">
    <subcellularLocation>
        <location evidence="1">Cytoplasm</location>
    </subcellularLocation>
</comment>
<comment type="similarity">
    <text evidence="1">Belongs to the radical SAM superfamily. Lipoyl synthase family.</text>
</comment>
<dbReference type="EC" id="2.8.1.8" evidence="1"/>
<dbReference type="EMBL" id="CP001600">
    <property type="protein sequence ID" value="ACR70102.1"/>
    <property type="molecule type" value="Genomic_DNA"/>
</dbReference>
<dbReference type="RefSeq" id="WP_015872195.1">
    <property type="nucleotide sequence ID" value="NZ_CP169062.1"/>
</dbReference>
<dbReference type="SMR" id="C5BGD9"/>
<dbReference type="STRING" id="67780.B6E78_06645"/>
<dbReference type="GeneID" id="69539831"/>
<dbReference type="KEGG" id="eic:NT01EI_2948"/>
<dbReference type="PATRIC" id="fig|634503.3.peg.2635"/>
<dbReference type="HOGENOM" id="CLU_033144_2_1_6"/>
<dbReference type="OrthoDB" id="9787898at2"/>
<dbReference type="UniPathway" id="UPA00538">
    <property type="reaction ID" value="UER00593"/>
</dbReference>
<dbReference type="Proteomes" id="UP000001485">
    <property type="component" value="Chromosome"/>
</dbReference>
<dbReference type="GO" id="GO:0005737">
    <property type="term" value="C:cytoplasm"/>
    <property type="evidence" value="ECO:0007669"/>
    <property type="project" value="UniProtKB-SubCell"/>
</dbReference>
<dbReference type="GO" id="GO:0051539">
    <property type="term" value="F:4 iron, 4 sulfur cluster binding"/>
    <property type="evidence" value="ECO:0007669"/>
    <property type="project" value="UniProtKB-UniRule"/>
</dbReference>
<dbReference type="GO" id="GO:0016992">
    <property type="term" value="F:lipoate synthase activity"/>
    <property type="evidence" value="ECO:0007669"/>
    <property type="project" value="UniProtKB-UniRule"/>
</dbReference>
<dbReference type="GO" id="GO:0046872">
    <property type="term" value="F:metal ion binding"/>
    <property type="evidence" value="ECO:0007669"/>
    <property type="project" value="UniProtKB-KW"/>
</dbReference>
<dbReference type="CDD" id="cd01335">
    <property type="entry name" value="Radical_SAM"/>
    <property type="match status" value="1"/>
</dbReference>
<dbReference type="FunFam" id="3.20.20.70:FF:000023">
    <property type="entry name" value="Lipoyl synthase"/>
    <property type="match status" value="1"/>
</dbReference>
<dbReference type="Gene3D" id="3.20.20.70">
    <property type="entry name" value="Aldolase class I"/>
    <property type="match status" value="1"/>
</dbReference>
<dbReference type="HAMAP" id="MF_00206">
    <property type="entry name" value="Lipoyl_synth"/>
    <property type="match status" value="1"/>
</dbReference>
<dbReference type="InterPro" id="IPR013785">
    <property type="entry name" value="Aldolase_TIM"/>
</dbReference>
<dbReference type="InterPro" id="IPR006638">
    <property type="entry name" value="Elp3/MiaA/NifB-like_rSAM"/>
</dbReference>
<dbReference type="InterPro" id="IPR031691">
    <property type="entry name" value="LIAS_N"/>
</dbReference>
<dbReference type="InterPro" id="IPR003698">
    <property type="entry name" value="Lipoyl_synth"/>
</dbReference>
<dbReference type="InterPro" id="IPR007197">
    <property type="entry name" value="rSAM"/>
</dbReference>
<dbReference type="NCBIfam" id="TIGR00510">
    <property type="entry name" value="lipA"/>
    <property type="match status" value="1"/>
</dbReference>
<dbReference type="NCBIfam" id="NF004019">
    <property type="entry name" value="PRK05481.1"/>
    <property type="match status" value="1"/>
</dbReference>
<dbReference type="NCBIfam" id="NF009544">
    <property type="entry name" value="PRK12928.1"/>
    <property type="match status" value="1"/>
</dbReference>
<dbReference type="PANTHER" id="PTHR10949">
    <property type="entry name" value="LIPOYL SYNTHASE"/>
    <property type="match status" value="1"/>
</dbReference>
<dbReference type="PANTHER" id="PTHR10949:SF0">
    <property type="entry name" value="LIPOYL SYNTHASE, MITOCHONDRIAL"/>
    <property type="match status" value="1"/>
</dbReference>
<dbReference type="Pfam" id="PF16881">
    <property type="entry name" value="LIAS_N"/>
    <property type="match status" value="1"/>
</dbReference>
<dbReference type="Pfam" id="PF04055">
    <property type="entry name" value="Radical_SAM"/>
    <property type="match status" value="1"/>
</dbReference>
<dbReference type="PIRSF" id="PIRSF005963">
    <property type="entry name" value="Lipoyl_synth"/>
    <property type="match status" value="1"/>
</dbReference>
<dbReference type="SFLD" id="SFLDF00271">
    <property type="entry name" value="lipoyl_synthase"/>
    <property type="match status" value="1"/>
</dbReference>
<dbReference type="SFLD" id="SFLDG01058">
    <property type="entry name" value="lipoyl_synthase_like"/>
    <property type="match status" value="1"/>
</dbReference>
<dbReference type="SMART" id="SM00729">
    <property type="entry name" value="Elp3"/>
    <property type="match status" value="1"/>
</dbReference>
<dbReference type="SUPFAM" id="SSF102114">
    <property type="entry name" value="Radical SAM enzymes"/>
    <property type="match status" value="1"/>
</dbReference>
<dbReference type="PROSITE" id="PS51918">
    <property type="entry name" value="RADICAL_SAM"/>
    <property type="match status" value="1"/>
</dbReference>
<reference key="1">
    <citation type="submission" date="2009-03" db="EMBL/GenBank/DDBJ databases">
        <title>Complete genome sequence of Edwardsiella ictaluri 93-146.</title>
        <authorList>
            <person name="Williams M.L."/>
            <person name="Gillaspy A.F."/>
            <person name="Dyer D.W."/>
            <person name="Thune R.L."/>
            <person name="Waldbieser G.C."/>
            <person name="Schuster S.C."/>
            <person name="Gipson J."/>
            <person name="Zaitshik J."/>
            <person name="Landry C."/>
            <person name="Lawrence M.L."/>
        </authorList>
    </citation>
    <scope>NUCLEOTIDE SEQUENCE [LARGE SCALE GENOMIC DNA]</scope>
    <source>
        <strain>93-146</strain>
    </source>
</reference>
<protein>
    <recommendedName>
        <fullName evidence="1">Lipoyl synthase</fullName>
        <ecNumber evidence="1">2.8.1.8</ecNumber>
    </recommendedName>
    <alternativeName>
        <fullName evidence="1">Lip-syn</fullName>
        <shortName evidence="1">LS</shortName>
    </alternativeName>
    <alternativeName>
        <fullName evidence="1">Lipoate synthase</fullName>
    </alternativeName>
    <alternativeName>
        <fullName evidence="1">Lipoic acid synthase</fullName>
    </alternativeName>
    <alternativeName>
        <fullName evidence="1">Sulfur insertion protein LipA</fullName>
    </alternativeName>
</protein>
<sequence>MSKPIQMERGVKYRDADKMALIPVKSVAVEREQLLRKPEWMKIKLPADSSRIQGIKAAMRKNGLHSVCEEASCPNLAECFNHGTATFMILGAICTRRCPFCDVAHGRPLAPDTNEPEKLAQTIADMGLRYVVITSVDRDDLRDGGAQHFADCIHAIRAKSPQIRIETLVPDFRGRMDRALEILHDNPPDVFNHNLENIPRLYRQVRPGANYEWSLRLLQQFKQQHPQIPTKSGLMVGLGETNQEIIEVMRDLRAHGVTMLTLGQYLQPSRHHLPVQRYVSPEEFAEMKAEALAMGFTHAACGPFVRSSYHADLQAQGMEVK</sequence>
<accession>C5BGD9</accession>
<name>LIPA_EDWI9</name>
<feature type="chain" id="PRO_1000204147" description="Lipoyl synthase">
    <location>
        <begin position="1"/>
        <end position="321"/>
    </location>
</feature>
<feature type="domain" description="Radical SAM core" evidence="2">
    <location>
        <begin position="80"/>
        <end position="297"/>
    </location>
</feature>
<feature type="binding site" evidence="1">
    <location>
        <position position="68"/>
    </location>
    <ligand>
        <name>[4Fe-4S] cluster</name>
        <dbReference type="ChEBI" id="CHEBI:49883"/>
        <label>1</label>
    </ligand>
</feature>
<feature type="binding site" evidence="1">
    <location>
        <position position="73"/>
    </location>
    <ligand>
        <name>[4Fe-4S] cluster</name>
        <dbReference type="ChEBI" id="CHEBI:49883"/>
        <label>1</label>
    </ligand>
</feature>
<feature type="binding site" evidence="1">
    <location>
        <position position="79"/>
    </location>
    <ligand>
        <name>[4Fe-4S] cluster</name>
        <dbReference type="ChEBI" id="CHEBI:49883"/>
        <label>1</label>
    </ligand>
</feature>
<feature type="binding site" evidence="1">
    <location>
        <position position="94"/>
    </location>
    <ligand>
        <name>[4Fe-4S] cluster</name>
        <dbReference type="ChEBI" id="CHEBI:49883"/>
        <label>2</label>
        <note>4Fe-4S-S-AdoMet</note>
    </ligand>
</feature>
<feature type="binding site" evidence="1">
    <location>
        <position position="98"/>
    </location>
    <ligand>
        <name>[4Fe-4S] cluster</name>
        <dbReference type="ChEBI" id="CHEBI:49883"/>
        <label>2</label>
        <note>4Fe-4S-S-AdoMet</note>
    </ligand>
</feature>
<feature type="binding site" evidence="1">
    <location>
        <position position="101"/>
    </location>
    <ligand>
        <name>[4Fe-4S] cluster</name>
        <dbReference type="ChEBI" id="CHEBI:49883"/>
        <label>2</label>
        <note>4Fe-4S-S-AdoMet</note>
    </ligand>
</feature>
<feature type="binding site" evidence="1">
    <location>
        <position position="308"/>
    </location>
    <ligand>
        <name>[4Fe-4S] cluster</name>
        <dbReference type="ChEBI" id="CHEBI:49883"/>
        <label>1</label>
    </ligand>
</feature>
<proteinExistence type="inferred from homology"/>
<evidence type="ECO:0000255" key="1">
    <source>
        <dbReference type="HAMAP-Rule" id="MF_00206"/>
    </source>
</evidence>
<evidence type="ECO:0000255" key="2">
    <source>
        <dbReference type="PROSITE-ProRule" id="PRU01266"/>
    </source>
</evidence>